<name>MCM4_HUMAN</name>
<comment type="function">
    <text evidence="4 9 11 12 13 14 17">Acts as a component of the MCM2-7 complex (MCM complex) which is the replicative helicase essential for 'once per cell cycle' DNA replication initiation and elongation in eukaryotic cells. Core component of CDC45-MCM-GINS (CMG) helicase, the molecular machine that unwinds template DNA during replication, and around which the replisome is built (PubMed:16899510, PubMed:25661590, PubMed:32453425, PubMed:34694004, PubMed:34700328, PubMed:35585232, PubMed:9305914). The active ATPase sites in the MCM2-7 ring are formed through the interaction surfaces of two neighboring subunits such that a critical structure of a conserved arginine finger motif is provided in trans relative to the ATP-binding site of the Walker A box of the adjacent subunit. The six ATPase active sites, however, are likely to contribute differentially to the complex helicase activity (PubMed:16899510, PubMed:25661590, PubMed:32453425, PubMed:9305914).</text>
</comment>
<comment type="catalytic activity">
    <reaction evidence="9">
        <text>ATP + H2O = ADP + phosphate + H(+)</text>
        <dbReference type="Rhea" id="RHEA:13065"/>
        <dbReference type="ChEBI" id="CHEBI:15377"/>
        <dbReference type="ChEBI" id="CHEBI:15378"/>
        <dbReference type="ChEBI" id="CHEBI:30616"/>
        <dbReference type="ChEBI" id="CHEBI:43474"/>
        <dbReference type="ChEBI" id="CHEBI:456216"/>
        <dbReference type="EC" id="3.6.4.12"/>
    </reaction>
    <physiologicalReaction direction="left-to-right" evidence="9">
        <dbReference type="Rhea" id="RHEA:13066"/>
    </physiologicalReaction>
</comment>
<comment type="subunit">
    <text evidence="4 5 11 12 13 17">Component of the MCM2-7 complex (PubMed:16899510, PubMed:9305914). The complex forms a toroidal hexameric ring with the proposed subunit order MCM2-MCM6-MCM4-MCM7-MCM3-MCM5 (PubMed:16899510, PubMed:32453425, PubMed:9305914). Component of the CMG helicase complex, a hexameric ring of related MCM2-7 subunits stabilized by CDC45 and the tetrameric GINS complex (PubMed:32453425, PubMed:34694004, PubMed:34700328). Interacts with MCMBP (PubMed:17296731).</text>
</comment>
<comment type="interaction">
    <interactant intactId="EBI-374938">
        <id>P33991</id>
    </interactant>
    <interactant intactId="EBI-355924">
        <id>P33993</id>
        <label>MCM7</label>
    </interactant>
    <organismsDiffer>false</organismsDiffer>
    <experiments>14</experiments>
</comment>
<comment type="interaction">
    <interactant intactId="EBI-374938">
        <id>P33991</id>
    </interactant>
    <interactant intactId="EBI-749378">
        <id>Q9BTE3</id>
        <label>MCMBP</label>
    </interactant>
    <organismsDiffer>false</organismsDiffer>
    <experiments>14</experiments>
</comment>
<comment type="interaction">
    <interactant intactId="EBI-374938">
        <id>P33991</id>
    </interactant>
    <interactant intactId="EBI-353771">
        <id>Q08945</id>
        <label>SSRP1</label>
    </interactant>
    <organismsDiffer>false</organismsDiffer>
    <experiments>8</experiments>
</comment>
<comment type="interaction">
    <interactant intactId="EBI-374938">
        <id>P33991</id>
    </interactant>
    <interactant intactId="EBI-1046849">
        <id>Q9Y5B9</id>
        <label>SUPT16H</label>
    </interactant>
    <organismsDiffer>false</organismsDiffer>
    <experiments>3</experiments>
</comment>
<comment type="interaction">
    <interactant intactId="EBI-374938">
        <id>P33991</id>
    </interactant>
    <interactant intactId="EBI-6248094">
        <id>Q9Q2G4</id>
        <label>ORF</label>
    </interactant>
    <organismsDiffer>true</organismsDiffer>
    <experiments>3</experiments>
</comment>
<comment type="subcellular location">
    <subcellularLocation>
        <location evidence="21">Nucleus</location>
    </subcellularLocation>
    <subcellularLocation>
        <location evidence="21">Chromosome</location>
    </subcellularLocation>
    <text evidence="21">Associated with chromatin before the formation of nuclei and detaches from it as DNA replication progresses.</text>
</comment>
<comment type="PTM">
    <text evidence="1">Sumoylated; SUMO2 modified in response to stress caused by inhibition of proteasome activity (in vitro).</text>
</comment>
<comment type="disease" evidence="6 7 8">
    <disease id="DI-03605">
        <name>Immunodeficiency 54</name>
        <acronym>IMD54</acronym>
        <description>An autosomal recessive disorder characterized by severe intra- and extrauterine growth retardation, microcephaly, decreased numbers of natural killer cells, and recurrent viral infections, most often affecting the respiratory tract and leading to respiratory failure. Affected individuals also have adrenal insufficiency requiring corticosteroid replacement therapy and may have an increased susceptibility to cancer.</description>
        <dbReference type="MIM" id="609981"/>
    </disease>
    <text>The disease is caused by variants affecting the gene represented in this entry.</text>
</comment>
<comment type="miscellaneous">
    <text evidence="1">Early fractionation of eukaryotic MCM proteins yielded a variety of dimeric, trimeric and tetrameric complexes with unclear biological significance. Specifically a MCM467 subcomplex is shown to have in vitro helicase activity which is inhibited by the MCM2 subunit. The MCM2-7 hexamer is the proposed physiological active complex.</text>
</comment>
<comment type="similarity">
    <text evidence="19">Belongs to the MCM family.</text>
</comment>
<proteinExistence type="evidence at protein level"/>
<reference key="1">
    <citation type="journal article" date="1995" name="Eur. J. Biochem.">
        <title>A human homologue of the yeast replication protein Cdc21. Interactions with other Mcm proteins.</title>
        <authorList>
            <person name="Musahl C."/>
            <person name="Schulte D."/>
            <person name="Burkhart R."/>
            <person name="Knippers R."/>
        </authorList>
    </citation>
    <scope>NUCLEOTIDE SEQUENCE [MRNA]</scope>
    <scope>VARIANT MET-650</scope>
</reference>
<reference key="2">
    <citation type="submission" date="2004-04" db="EMBL/GenBank/DDBJ databases">
        <authorList>
            <consortium name="NIEHS SNPs program"/>
        </authorList>
    </citation>
    <scope>NUCLEOTIDE SEQUENCE [GENOMIC DNA]</scope>
    <scope>VARIANT GLY-460</scope>
</reference>
<reference key="3">
    <citation type="journal article" date="2004" name="Genome Res.">
        <title>The status, quality, and expansion of the NIH full-length cDNA project: the Mammalian Gene Collection (MGC).</title>
        <authorList>
            <consortium name="The MGC Project Team"/>
        </authorList>
    </citation>
    <scope>NUCLEOTIDE SEQUENCE [LARGE SCALE MRNA]</scope>
    <scope>VARIANT MET-650</scope>
    <source>
        <tissue>Testis</tissue>
    </source>
</reference>
<reference key="4">
    <citation type="journal article" date="1998" name="Genomics">
        <title>The promoters for human DNA-PKcs (PRKDC) and MCM4: divergently transcribed genes located at chromosome 8 band q11.</title>
        <authorList>
            <person name="Connelly M.A."/>
            <person name="Zhang H."/>
            <person name="Kieleczawa J."/>
            <person name="Anderson C.W."/>
        </authorList>
    </citation>
    <scope>NUCLEOTIDE SEQUENCE [GENOMIC DNA] OF 1-712</scope>
</reference>
<reference key="5">
    <citation type="journal article" date="1997" name="Cytogenet. Cell Genet.">
        <title>MCM4 and PRKDC, human genes encoding proteins MCM4 and DNA-PKcs, are close neighbours located on chromosome 8q12--&gt;q13.</title>
        <authorList>
            <person name="Ladenburger E.M."/>
            <person name="Fackelmayer F.O."/>
            <person name="Hameister H."/>
            <person name="Knippers R."/>
        </authorList>
    </citation>
    <scope>NUCLEOTIDE SEQUENCE [GENOMIC DNA / MRNA] OF 1-23</scope>
</reference>
<reference key="6">
    <citation type="journal article" date="1993" name="Nucleic Acids Res.">
        <title>The P1 family: a new class of nuclear mammalian proteins related to the yeast Mcm replication proteins.</title>
        <authorList>
            <person name="Hu B."/>
            <person name="Burkhart R."/>
            <person name="Schulte D."/>
            <person name="Musahl C."/>
            <person name="Knippers R."/>
        </authorList>
    </citation>
    <scope>NUCLEOTIDE SEQUENCE [MRNA] OF 440-863</scope>
    <scope>VARIANT MET-650</scope>
    <source>
        <tissue>Cervix</tissue>
    </source>
</reference>
<reference key="7">
    <citation type="journal article" date="1997" name="J. Biol. Chem.">
        <title>A DNA helicase activity is associated with an MCM4, -6, and -7 protein complex.</title>
        <authorList>
            <person name="Ishimi Y."/>
        </authorList>
    </citation>
    <scope>IDENTIFICATION IN THE MCM2-7 COMPLEX</scope>
    <scope>FUNCTION</scope>
</reference>
<reference key="8">
    <citation type="journal article" date="2006" name="Cell">
        <title>Global, in vivo, and site-specific phosphorylation dynamics in signaling networks.</title>
        <authorList>
            <person name="Olsen J.V."/>
            <person name="Blagoev B."/>
            <person name="Gnad F."/>
            <person name="Macek B."/>
            <person name="Kumar C."/>
            <person name="Mortensen P."/>
            <person name="Mann M."/>
        </authorList>
    </citation>
    <scope>PHOSPHORYLATION [LARGE SCALE ANALYSIS] AT SER-120</scope>
    <scope>IDENTIFICATION BY MASS SPECTROMETRY [LARGE SCALE ANALYSIS]</scope>
    <source>
        <tissue>Cervix carcinoma</tissue>
    </source>
</reference>
<reference key="9">
    <citation type="journal article" date="2006" name="Mol. Biol. Cell">
        <title>Essential role of phosphorylation of MCM2 by Cdc7/Dbf4 in the initiation of DNA replication in mammalian cells.</title>
        <authorList>
            <person name="Tsuji T."/>
            <person name="Ficarro S.B."/>
            <person name="Jiang W."/>
        </authorList>
    </citation>
    <scope>IDENTIFICATION IN THE MCM2-7 COMPLEX</scope>
    <scope>ATPASE ACTIVITY OF THE MCM2-7 COMPLEX</scope>
</reference>
<reference key="10">
    <citation type="journal article" date="2007" name="Mol. Cell. Biol.">
        <title>Identification and characterization of a novel component of the human minichromosome maintenance complex.</title>
        <authorList>
            <person name="Sakwe A.M."/>
            <person name="Nguyen T."/>
            <person name="Athanasopoulos V."/>
            <person name="Shire K."/>
            <person name="Frappier L."/>
        </authorList>
    </citation>
    <scope>HELICASE ACTIVITY OF THE MCM2-3 COMPLEX</scope>
    <scope>INTERACTION WITH MCMBP</scope>
    <scope>IDENTIFICATION IN THE MCM2-7 COMPLEX</scope>
    <scope>IDENTIFICATION BY MASS SPECTROMETRY</scope>
</reference>
<reference key="11">
    <citation type="journal article" date="2008" name="J. Proteome Res.">
        <title>Combining protein-based IMAC, peptide-based IMAC, and MudPIT for efficient phosphoproteomic analysis.</title>
        <authorList>
            <person name="Cantin G.T."/>
            <person name="Yi W."/>
            <person name="Lu B."/>
            <person name="Park S.K."/>
            <person name="Xu T."/>
            <person name="Lee J.-D."/>
            <person name="Yates J.R. III"/>
        </authorList>
    </citation>
    <scope>IDENTIFICATION BY MASS SPECTROMETRY [LARGE SCALE ANALYSIS]</scope>
    <source>
        <tissue>Cervix carcinoma</tissue>
    </source>
</reference>
<reference key="12">
    <citation type="journal article" date="2008" name="Mol. Cell">
        <title>Kinase-selective enrichment enables quantitative phosphoproteomics of the kinome across the cell cycle.</title>
        <authorList>
            <person name="Daub H."/>
            <person name="Olsen J.V."/>
            <person name="Bairlein M."/>
            <person name="Gnad F."/>
            <person name="Oppermann F.S."/>
            <person name="Korner R."/>
            <person name="Greff Z."/>
            <person name="Keri G."/>
            <person name="Stemmann O."/>
            <person name="Mann M."/>
        </authorList>
    </citation>
    <scope>PHOSPHORYLATION [LARGE SCALE ANALYSIS] AT SER-120</scope>
    <scope>IDENTIFICATION BY MASS SPECTROMETRY [LARGE SCALE ANALYSIS]</scope>
    <source>
        <tissue>Cervix carcinoma</tissue>
    </source>
</reference>
<reference key="13">
    <citation type="journal article" date="2008" name="Proc. Natl. Acad. Sci. U.S.A.">
        <title>A quantitative atlas of mitotic phosphorylation.</title>
        <authorList>
            <person name="Dephoure N."/>
            <person name="Zhou C."/>
            <person name="Villen J."/>
            <person name="Beausoleil S.A."/>
            <person name="Bakalarski C.E."/>
            <person name="Elledge S.J."/>
            <person name="Gygi S.P."/>
        </authorList>
    </citation>
    <scope>PHOSPHORYLATION [LARGE SCALE ANALYSIS] AT SER-26; SER-31; SER-32 AND SER-34</scope>
    <scope>IDENTIFICATION BY MASS SPECTROMETRY [LARGE SCALE ANALYSIS]</scope>
    <source>
        <tissue>Cervix carcinoma</tissue>
    </source>
</reference>
<reference key="14">
    <citation type="journal article" date="2009" name="Sci. Signal.">
        <title>Quantitative phosphoproteomic analysis of T cell receptor signaling reveals system-wide modulation of protein-protein interactions.</title>
        <authorList>
            <person name="Mayya V."/>
            <person name="Lundgren D.H."/>
            <person name="Hwang S.-I."/>
            <person name="Rezaul K."/>
            <person name="Wu L."/>
            <person name="Eng J.K."/>
            <person name="Rodionov V."/>
            <person name="Han D.K."/>
        </authorList>
    </citation>
    <scope>PHOSPHORYLATION [LARGE SCALE ANALYSIS] AT SER-131</scope>
    <scope>IDENTIFICATION BY MASS SPECTROMETRY [LARGE SCALE ANALYSIS]</scope>
    <source>
        <tissue>Leukemic T-cell</tissue>
    </source>
</reference>
<reference key="15">
    <citation type="journal article" date="2009" name="Science">
        <title>Lysine acetylation targets protein complexes and co-regulates major cellular functions.</title>
        <authorList>
            <person name="Choudhary C."/>
            <person name="Kumar C."/>
            <person name="Gnad F."/>
            <person name="Nielsen M.L."/>
            <person name="Rehman M."/>
            <person name="Walther T.C."/>
            <person name="Olsen J.V."/>
            <person name="Mann M."/>
        </authorList>
    </citation>
    <scope>ACETYLATION [LARGE SCALE ANALYSIS] AT LYS-220 AND LYS-450</scope>
    <scope>IDENTIFICATION BY MASS SPECTROMETRY [LARGE SCALE ANALYSIS]</scope>
</reference>
<reference key="16">
    <citation type="journal article" date="2010" name="Sci. Signal.">
        <title>Quantitative phosphoproteomics reveals widespread full phosphorylation site occupancy during mitosis.</title>
        <authorList>
            <person name="Olsen J.V."/>
            <person name="Vermeulen M."/>
            <person name="Santamaria A."/>
            <person name="Kumar C."/>
            <person name="Miller M.L."/>
            <person name="Jensen L.J."/>
            <person name="Gnad F."/>
            <person name="Cox J."/>
            <person name="Jensen T.S."/>
            <person name="Nigg E.A."/>
            <person name="Brunak S."/>
            <person name="Mann M."/>
        </authorList>
    </citation>
    <scope>ACETYLATION [LARGE SCALE ANALYSIS] AT SER-2</scope>
    <scope>PHOSPHORYLATION [LARGE SCALE ANALYSIS] AT SER-32; SER-120; SER-131; SER-142 AND SER-145</scope>
    <scope>CLEAVAGE OF INITIATOR METHIONINE [LARGE SCALE ANALYSIS]</scope>
    <scope>IDENTIFICATION BY MASS SPECTROMETRY [LARGE SCALE ANALYSIS]</scope>
    <source>
        <tissue>Cervix carcinoma</tissue>
    </source>
</reference>
<reference key="17">
    <citation type="journal article" date="2011" name="BMC Syst. Biol.">
        <title>Initial characterization of the human central proteome.</title>
        <authorList>
            <person name="Burkard T.R."/>
            <person name="Planyavsky M."/>
            <person name="Kaupe I."/>
            <person name="Breitwieser F.P."/>
            <person name="Buerckstuemmer T."/>
            <person name="Bennett K.L."/>
            <person name="Superti-Furga G."/>
            <person name="Colinge J."/>
        </authorList>
    </citation>
    <scope>IDENTIFICATION BY MASS SPECTROMETRY [LARGE SCALE ANALYSIS]</scope>
</reference>
<reference key="18">
    <citation type="journal article" date="2011" name="Sci. Signal.">
        <title>System-wide temporal characterization of the proteome and phosphoproteome of human embryonic stem cell differentiation.</title>
        <authorList>
            <person name="Rigbolt K.T."/>
            <person name="Prokhorova T.A."/>
            <person name="Akimov V."/>
            <person name="Henningsen J."/>
            <person name="Johansen P.T."/>
            <person name="Kratchmarova I."/>
            <person name="Kassem M."/>
            <person name="Mann M."/>
            <person name="Olsen J.V."/>
            <person name="Blagoev B."/>
        </authorList>
    </citation>
    <scope>ACETYLATION [LARGE SCALE ANALYSIS] AT SER-2</scope>
    <scope>PHOSPHORYLATION [LARGE SCALE ANALYSIS] AT SER-120 AND SER-131</scope>
    <scope>CLEAVAGE OF INITIATOR METHIONINE [LARGE SCALE ANALYSIS]</scope>
    <scope>IDENTIFICATION BY MASS SPECTROMETRY [LARGE SCALE ANALYSIS]</scope>
</reference>
<reference key="19">
    <citation type="journal article" date="2012" name="J. Clin. Invest.">
        <title>MCM4 mutation causes adrenal failure, short stature, and natural killer cell deficiency in humans.</title>
        <authorList>
            <person name="Hughes C.R."/>
            <person name="Guasti L."/>
            <person name="Meimaridou E."/>
            <person name="Chuang C.H."/>
            <person name="Schimenti J.C."/>
            <person name="King P.J."/>
            <person name="Costigan C."/>
            <person name="Clark A.J."/>
            <person name="Metherell L.A."/>
        </authorList>
    </citation>
    <scope>INVOLVEMENT IN IMD54</scope>
</reference>
<reference key="20">
    <citation type="journal article" date="2012" name="J. Clin. Invest.">
        <title>Partial MCM4 deficiency in patients with growth retardation, adrenal insufficiency, and natural killer cell deficiency.</title>
        <authorList>
            <person name="Gineau L."/>
            <person name="Cognet C."/>
            <person name="Kara N."/>
            <person name="Lach F.P."/>
            <person name="Dunne J."/>
            <person name="Veturi U."/>
            <person name="Picard C."/>
            <person name="Trouillet C."/>
            <person name="Eidenschenk C."/>
            <person name="Aoufouchi S."/>
            <person name="Alcais A."/>
            <person name="Smith O."/>
            <person name="Geissmann F."/>
            <person name="Feighery C."/>
            <person name="Abel L."/>
            <person name="Smogorzewska A."/>
            <person name="Stillman B."/>
            <person name="Vivier E."/>
            <person name="Casanova J.L."/>
            <person name="Jouanguy E."/>
        </authorList>
    </citation>
    <scope>INVOLVEMENT IN IMD54</scope>
</reference>
<reference key="21">
    <citation type="journal article" date="2012" name="J. Med. Genet.">
        <title>Recessive mutations in MCM4/PRKDC cause a novel syndrome involving a primary immunodeficiency and a disorder of DNA repair.</title>
        <authorList>
            <person name="Casey J.P."/>
            <person name="Nobbs M."/>
            <person name="McGettigan P."/>
            <person name="Lynch S."/>
            <person name="Ennis S."/>
        </authorList>
    </citation>
    <scope>INVOLVEMENT IN IMD54</scope>
</reference>
<reference key="22">
    <citation type="journal article" date="2012" name="Proc. Natl. Acad. Sci. U.S.A.">
        <title>N-terminal acetylome analyses and functional insights of the N-terminal acetyltransferase NatB.</title>
        <authorList>
            <person name="Van Damme P."/>
            <person name="Lasa M."/>
            <person name="Polevoda B."/>
            <person name="Gazquez C."/>
            <person name="Elosegui-Artola A."/>
            <person name="Kim D.S."/>
            <person name="De Juan-Pardo E."/>
            <person name="Demeyer K."/>
            <person name="Hole K."/>
            <person name="Larrea E."/>
            <person name="Timmerman E."/>
            <person name="Prieto J."/>
            <person name="Arnesen T."/>
            <person name="Sherman F."/>
            <person name="Gevaert K."/>
            <person name="Aldabe R."/>
        </authorList>
    </citation>
    <scope>ACETYLATION [LARGE SCALE ANALYSIS] AT SER-2</scope>
    <scope>CLEAVAGE OF INITIATOR METHIONINE [LARGE SCALE ANALYSIS]</scope>
    <scope>IDENTIFICATION BY MASS SPECTROMETRY [LARGE SCALE ANALYSIS]</scope>
</reference>
<reference key="23">
    <citation type="journal article" date="2013" name="J. Proteome Res.">
        <title>Toward a comprehensive characterization of a human cancer cell phosphoproteome.</title>
        <authorList>
            <person name="Zhou H."/>
            <person name="Di Palma S."/>
            <person name="Preisinger C."/>
            <person name="Peng M."/>
            <person name="Polat A.N."/>
            <person name="Heck A.J."/>
            <person name="Mohammed S."/>
        </authorList>
    </citation>
    <scope>PHOSPHORYLATION [LARGE SCALE ANALYSIS] AT SER-26; SER-32; THR-102; SER-105; THR-110; SER-120 AND SER-131</scope>
    <scope>IDENTIFICATION BY MASS SPECTROMETRY [LARGE SCALE ANALYSIS]</scope>
    <source>
        <tissue>Cervix carcinoma</tissue>
        <tissue>Erythroleukemia</tissue>
    </source>
</reference>
<reference key="24">
    <citation type="journal article" date="2015" name="J. Biochem.">
        <title>G364R mutation of MCM4 detected in human skin cancer cells affects DNA helicase activity of MCM4/6/7 complex.</title>
        <authorList>
            <person name="Ishimi Y."/>
            <person name="Irie D."/>
        </authorList>
    </citation>
    <scope>FUNCTION</scope>
    <scope>MUTAGENESIS OF GLY-364</scope>
    <scope>CATALYTIC ACTIVITY</scope>
</reference>
<reference key="25">
    <citation type="journal article" date="2016" name="Nat. Commun.">
        <title>Claspin recruits Cdc7 kinase for initiation of DNA replication in human cells.</title>
        <authorList>
            <person name="Yang C.C."/>
            <person name="Suzuki M."/>
            <person name="Yamakawa S."/>
            <person name="Uno S."/>
            <person name="Ishii A."/>
            <person name="Yamazaki S."/>
            <person name="Fukatsu R."/>
            <person name="Fujisawa R."/>
            <person name="Sakimura K."/>
            <person name="Tsurimoto T."/>
            <person name="Masai H."/>
        </authorList>
    </citation>
    <scope>PHOSPHORYLATION AT SER-6 AND THR-7</scope>
</reference>
<reference key="26">
    <citation type="journal article" date="2017" name="Nat. Struct. Mol. Biol.">
        <title>Site-specific mapping of the human SUMO proteome reveals co-modification with phosphorylation.</title>
        <authorList>
            <person name="Hendriks I.A."/>
            <person name="Lyon D."/>
            <person name="Young C."/>
            <person name="Jensen L.J."/>
            <person name="Vertegaal A.C."/>
            <person name="Nielsen M.L."/>
        </authorList>
    </citation>
    <scope>SUMOYLATION [LARGE SCALE ANALYSIS] AT LYS-439 AND LYS-798</scope>
    <scope>IDENTIFICATION BY MASS SPECTROMETRY [LARGE SCALE ANALYSIS]</scope>
</reference>
<reference key="27">
    <citation type="journal article" date="2022" name="Nature">
        <title>Fast and efficient DNA replication with purified human proteins.</title>
        <authorList>
            <person name="Baris Y."/>
            <person name="Taylor M.R.G."/>
            <person name="Aria V."/>
            <person name="Yeeles J.T.P."/>
        </authorList>
    </citation>
    <scope>FUNCTION</scope>
    <scope>SUBCELLULAR LOCATION</scope>
</reference>
<reference evidence="23 24" key="28">
    <citation type="journal article" date="2020" name="Nucleic Acids Res.">
        <title>CryoEM structures of human CMG-ATPgammaS-DNA and CMG-AND-1 complexes.</title>
        <authorList>
            <person name="Rzechorzek N.J."/>
            <person name="Hardwick S.W."/>
            <person name="Jatikusumo V.A."/>
            <person name="Chirgadze D.Y."/>
            <person name="Pellegrini L."/>
        </authorList>
    </citation>
    <scope>STRUCTURE BY ELECTRON MICROSCOPY (3.29 ANGSTROMS) IN COMPLEXES WITH ATP ANALOG AND WDHD1 IN CMG COMPLEX</scope>
    <scope>SUBUNIT</scope>
    <scope>FUNCTION</scope>
</reference>
<reference evidence="26" key="29">
    <citation type="journal article" date="2021" name="Nature">
        <title>A conserved mechanism for regulating replisome disassembly in eukaryotes.</title>
        <authorList>
            <person name="Jenkyn-Bedford M."/>
            <person name="Jones M.L."/>
            <person name="Baris Y."/>
            <person name="Labib K.P.M."/>
            <person name="Cannone G."/>
            <person name="Yeeles J.T.P."/>
            <person name="Deegan T.D."/>
        </authorList>
    </citation>
    <scope>STRUCTURE BY ELECTRON MICROSCOPY (2.80 ANGSTROMS) IN REPLISOME</scope>
    <scope>SUBUNIT</scope>
    <scope>FUNCTION</scope>
</reference>
<reference evidence="25" key="30">
    <citation type="journal article" date="2021" name="EMBO J.">
        <title>Structure of a human replisome shows the organisation and interactions of a DNA replication machine.</title>
        <authorList>
            <person name="Jones M.L."/>
            <person name="Baris Y."/>
            <person name="Taylor M.R.G."/>
            <person name="Yeeles J.T.P."/>
        </authorList>
    </citation>
    <scope>STRUCTURE BY ELECTRON MICROSCOPY (3.20 ANGSTROMS) IN REPLISOME</scope>
    <scope>SUBUNIT</scope>
    <scope>FUNCTION</scope>
</reference>
<gene>
    <name evidence="22" type="primary">MCM4</name>
    <name type="synonym">CDC21</name>
</gene>
<protein>
    <recommendedName>
        <fullName>DNA replication licensing factor MCM4</fullName>
        <ecNumber evidence="1">3.6.4.12</ecNumber>
    </recommendedName>
    <alternativeName>
        <fullName>CDC21 homolog</fullName>
    </alternativeName>
    <alternativeName>
        <fullName>P1-CDC21</fullName>
    </alternativeName>
</protein>
<accession>P33991</accession>
<accession>Q8NEH1</accession>
<accession>Q99658</accession>
<keyword id="KW-0002">3D-structure</keyword>
<keyword id="KW-0007">Acetylation</keyword>
<keyword id="KW-0067">ATP-binding</keyword>
<keyword id="KW-0131">Cell cycle</keyword>
<keyword id="KW-0158">Chromosome</keyword>
<keyword id="KW-0235">DNA replication</keyword>
<keyword id="KW-0238">DNA-binding</keyword>
<keyword id="KW-0347">Helicase</keyword>
<keyword id="KW-0378">Hydrolase</keyword>
<keyword id="KW-1017">Isopeptide bond</keyword>
<keyword id="KW-0547">Nucleotide-binding</keyword>
<keyword id="KW-0539">Nucleus</keyword>
<keyword id="KW-0597">Phosphoprotein</keyword>
<keyword id="KW-1267">Proteomics identification</keyword>
<keyword id="KW-1185">Reference proteome</keyword>
<keyword id="KW-0832">Ubl conjugation</keyword>
<feature type="initiator methionine" description="Removed" evidence="32 33 34">
    <location>
        <position position="1"/>
    </location>
</feature>
<feature type="chain" id="PRO_0000194101" description="DNA replication licensing factor MCM4">
    <location>
        <begin position="2"/>
        <end position="863"/>
    </location>
</feature>
<feature type="domain" description="MCM">
    <location>
        <begin position="458"/>
        <end position="667"/>
    </location>
</feature>
<feature type="region of interest" description="Disordered" evidence="2">
    <location>
        <begin position="1"/>
        <end position="60"/>
    </location>
</feature>
<feature type="region of interest" description="Disordered" evidence="2">
    <location>
        <begin position="91"/>
        <end position="126"/>
    </location>
</feature>
<feature type="short sequence motif" description="Arginine finger">
    <location>
        <begin position="642"/>
        <end position="645"/>
    </location>
</feature>
<feature type="compositionally biased region" description="Low complexity" evidence="2">
    <location>
        <begin position="1"/>
        <end position="10"/>
    </location>
</feature>
<feature type="binding site" evidence="20 23">
    <location>
        <position position="471"/>
    </location>
    <ligand>
        <name>ATP</name>
        <dbReference type="ChEBI" id="CHEBI:30616"/>
        <label>2</label>
        <note>ligand shared with MCM7</note>
    </ligand>
</feature>
<feature type="binding site" evidence="20 23">
    <location>
        <position position="497"/>
    </location>
    <ligand>
        <name>ATP</name>
        <dbReference type="ChEBI" id="CHEBI:30616"/>
        <label>1</label>
        <note>ligand shared with MCM6</note>
    </ligand>
</feature>
<feature type="binding site" evidence="20 23">
    <location>
        <position position="516"/>
    </location>
    <ligand>
        <name>ATP</name>
        <dbReference type="ChEBI" id="CHEBI:30616"/>
        <label>2</label>
        <note>ligand shared with MCM7</note>
    </ligand>
</feature>
<feature type="binding site" evidence="20 23">
    <location>
        <position position="517"/>
    </location>
    <ligand>
        <name>ATP</name>
        <dbReference type="ChEBI" id="CHEBI:30616"/>
        <label>2</label>
        <note>ligand shared with MCM7</note>
    </ligand>
</feature>
<feature type="binding site" evidence="20 23">
    <location>
        <position position="618"/>
    </location>
    <ligand>
        <name>ATP</name>
        <dbReference type="ChEBI" id="CHEBI:30616"/>
        <label>2</label>
        <note>ligand shared with MCM7</note>
    </ligand>
</feature>
<feature type="binding site" evidence="20 23">
    <location>
        <position position="643"/>
    </location>
    <ligand>
        <name>ATP</name>
        <dbReference type="ChEBI" id="CHEBI:30616"/>
        <label>1</label>
        <note>ligand shared with MCM6</note>
    </ligand>
</feature>
<feature type="binding site" evidence="20 23">
    <location>
        <position position="732"/>
    </location>
    <ligand>
        <name>ATP</name>
        <dbReference type="ChEBI" id="CHEBI:30616"/>
        <label>1</label>
        <note>ligand shared with MCM6</note>
    </ligand>
</feature>
<feature type="binding site" evidence="20 23">
    <location>
        <position position="735"/>
    </location>
    <ligand>
        <name>ATP</name>
        <dbReference type="ChEBI" id="CHEBI:30616"/>
        <label>1</label>
        <note>ligand shared with MCM6</note>
    </ligand>
</feature>
<feature type="modified residue" description="N-acetylserine" evidence="32 33 34">
    <location>
        <position position="2"/>
    </location>
</feature>
<feature type="modified residue" description="Phosphoserine; by CDC7" evidence="10">
    <location>
        <position position="6"/>
    </location>
</feature>
<feature type="modified residue" description="Phosphothreonine" evidence="10">
    <location>
        <position position="7"/>
    </location>
</feature>
<feature type="modified residue" description="Phosphothreonine" evidence="1">
    <location>
        <position position="19"/>
    </location>
</feature>
<feature type="modified residue" description="Phosphoserine" evidence="28 35">
    <location>
        <position position="26"/>
    </location>
</feature>
<feature type="modified residue" description="Phosphoserine" evidence="28">
    <location>
        <position position="31"/>
    </location>
</feature>
<feature type="modified residue" description="Phosphoserine" evidence="28 32 35">
    <location>
        <position position="32"/>
    </location>
</feature>
<feature type="modified residue" description="Phosphoserine" evidence="28">
    <location>
        <position position="34"/>
    </location>
</feature>
<feature type="modified residue" description="Phosphothreonine" evidence="35">
    <location>
        <position position="102"/>
    </location>
</feature>
<feature type="modified residue" description="Phosphoserine" evidence="35">
    <location>
        <position position="105"/>
    </location>
</feature>
<feature type="modified residue" description="Phosphothreonine" evidence="35">
    <location>
        <position position="110"/>
    </location>
</feature>
<feature type="modified residue" description="Phosphoserine" evidence="27 29 32 33 35">
    <location>
        <position position="120"/>
    </location>
</feature>
<feature type="modified residue" description="Phosphoserine" evidence="31 32 33 35">
    <location>
        <position position="131"/>
    </location>
</feature>
<feature type="modified residue" description="Phosphoserine" evidence="32">
    <location>
        <position position="142"/>
    </location>
</feature>
<feature type="modified residue" description="Phosphoserine" evidence="32">
    <location>
        <position position="145"/>
    </location>
</feature>
<feature type="modified residue" description="N6-acetyllysine" evidence="30">
    <location>
        <position position="220"/>
    </location>
</feature>
<feature type="modified residue" description="N6-acetyllysine" evidence="30">
    <location>
        <position position="450"/>
    </location>
</feature>
<feature type="modified residue" description="N6-acetyllysine" evidence="1">
    <location>
        <position position="858"/>
    </location>
</feature>
<feature type="cross-link" description="Glycyl lysine isopeptide (Lys-Gly) (interchain with G-Cter in SUMO2)" evidence="36">
    <location>
        <position position="439"/>
    </location>
</feature>
<feature type="cross-link" description="Glycyl lysine isopeptide (Lys-Gly) (interchain with G-Cter in SUMO2)" evidence="36">
    <location>
        <position position="798"/>
    </location>
</feature>
<feature type="sequence variant" id="VAR_020500" description="In dbSNP:rs17287663." evidence="18">
    <original>E</original>
    <variation>G</variation>
    <location>
        <position position="460"/>
    </location>
</feature>
<feature type="sequence variant" id="VAR_020501" description="In dbSNP:rs762679." evidence="3 15 16">
    <original>L</original>
    <variation>M</variation>
    <location>
        <position position="650"/>
    </location>
</feature>
<feature type="mutagenesis site" description="Reduced MCM complex DNA helicase activity. No effect on MCM complex formation. No effect on MCM complex ssDNA binding and ATPase activity." evidence="9">
    <original>G</original>
    <variation>R</variation>
    <location>
        <position position="364"/>
    </location>
</feature>
<feature type="sequence conflict" description="In Ref. 1; CAA52801." evidence="19" ref="1">
    <original>P</original>
    <variation>T</variation>
    <location>
        <position position="62"/>
    </location>
</feature>
<feature type="sequence conflict" description="In Ref. 1; CAA52801." evidence="19" ref="1">
    <original>P</original>
    <variation>Q</variation>
    <location>
        <position position="206"/>
    </location>
</feature>
<feature type="helix" evidence="37">
    <location>
        <begin position="159"/>
        <end position="172"/>
    </location>
</feature>
<feature type="turn" evidence="37">
    <location>
        <begin position="180"/>
        <end position="182"/>
    </location>
</feature>
<feature type="helix" evidence="37">
    <location>
        <begin position="192"/>
        <end position="203"/>
    </location>
</feature>
<feature type="strand" evidence="37">
    <location>
        <begin position="206"/>
        <end position="211"/>
    </location>
</feature>
<feature type="helix" evidence="37">
    <location>
        <begin position="212"/>
        <end position="218"/>
    </location>
</feature>
<feature type="helix" evidence="37">
    <location>
        <begin position="220"/>
        <end position="228"/>
    </location>
</feature>
<feature type="helix" evidence="37">
    <location>
        <begin position="230"/>
        <end position="248"/>
    </location>
</feature>
<feature type="strand" evidence="37">
    <location>
        <begin position="259"/>
        <end position="263"/>
    </location>
</feature>
<feature type="helix" evidence="37">
    <location>
        <begin position="271"/>
        <end position="273"/>
    </location>
</feature>
<feature type="helix" evidence="37">
    <location>
        <begin position="276"/>
        <end position="278"/>
    </location>
</feature>
<feature type="strand" evidence="37">
    <location>
        <begin position="282"/>
        <end position="292"/>
    </location>
</feature>
<feature type="strand" evidence="37">
    <location>
        <begin position="296"/>
        <end position="306"/>
    </location>
</feature>
<feature type="turn" evidence="37">
    <location>
        <begin position="307"/>
        <end position="309"/>
    </location>
</feature>
<feature type="strand" evidence="37">
    <location>
        <begin position="312"/>
        <end position="316"/>
    </location>
</feature>
<feature type="strand" evidence="37">
    <location>
        <begin position="321"/>
        <end position="324"/>
    </location>
</feature>
<feature type="strand" evidence="37">
    <location>
        <begin position="329"/>
        <end position="331"/>
    </location>
</feature>
<feature type="strand" evidence="37">
    <location>
        <begin position="337"/>
        <end position="356"/>
    </location>
</feature>
<feature type="strand" evidence="37">
    <location>
        <begin position="369"/>
        <end position="375"/>
    </location>
</feature>
<feature type="helix" evidence="37">
    <location>
        <begin position="376"/>
        <end position="378"/>
    </location>
</feature>
<feature type="strand" evidence="37">
    <location>
        <begin position="387"/>
        <end position="397"/>
    </location>
</feature>
<feature type="strand" evidence="37">
    <location>
        <begin position="400"/>
        <end position="402"/>
    </location>
</feature>
<feature type="strand" evidence="37">
    <location>
        <begin position="408"/>
        <end position="411"/>
    </location>
</feature>
<feature type="strand" evidence="37">
    <location>
        <begin position="413"/>
        <end position="422"/>
    </location>
</feature>
<feature type="strand" evidence="37">
    <location>
        <begin position="426"/>
        <end position="428"/>
    </location>
</feature>
<feature type="helix" evidence="37">
    <location>
        <begin position="432"/>
        <end position="435"/>
    </location>
</feature>
<feature type="helix" evidence="37">
    <location>
        <begin position="443"/>
        <end position="454"/>
    </location>
</feature>
<feature type="helix" evidence="37">
    <location>
        <begin position="458"/>
        <end position="465"/>
    </location>
</feature>
<feature type="helix" evidence="37">
    <location>
        <begin position="474"/>
        <end position="485"/>
    </location>
</feature>
<feature type="turn" evidence="37">
    <location>
        <begin position="493"/>
        <end position="495"/>
    </location>
</feature>
<feature type="strand" evidence="37">
    <location>
        <begin position="506"/>
        <end position="509"/>
    </location>
</feature>
<feature type="strand" evidence="37">
    <location>
        <begin position="512"/>
        <end position="515"/>
    </location>
</feature>
<feature type="helix" evidence="37">
    <location>
        <begin position="516"/>
        <end position="526"/>
    </location>
</feature>
<feature type="strand" evidence="37">
    <location>
        <begin position="527"/>
        <end position="534"/>
    </location>
</feature>
<feature type="helix" evidence="37">
    <location>
        <begin position="535"/>
        <end position="537"/>
    </location>
</feature>
<feature type="turn" evidence="37">
    <location>
        <begin position="540"/>
        <end position="542"/>
    </location>
</feature>
<feature type="strand" evidence="37">
    <location>
        <begin position="543"/>
        <end position="548"/>
    </location>
</feature>
<feature type="strand" evidence="37">
    <location>
        <begin position="551"/>
        <end position="554"/>
    </location>
</feature>
<feature type="strand" evidence="37">
    <location>
        <begin position="556"/>
        <end position="560"/>
    </location>
</feature>
<feature type="helix" evidence="37">
    <location>
        <begin position="562"/>
        <end position="565"/>
    </location>
</feature>
<feature type="turn" evidence="37">
    <location>
        <begin position="566"/>
        <end position="568"/>
    </location>
</feature>
<feature type="strand" evidence="37">
    <location>
        <begin position="569"/>
        <end position="574"/>
    </location>
</feature>
<feature type="turn" evidence="37">
    <location>
        <begin position="576"/>
        <end position="578"/>
    </location>
</feature>
<feature type="helix" evidence="37">
    <location>
        <begin position="581"/>
        <end position="593"/>
    </location>
</feature>
<feature type="strand" evidence="37">
    <location>
        <begin position="594"/>
        <end position="600"/>
    </location>
</feature>
<feature type="strand" evidence="37">
    <location>
        <begin position="603"/>
        <end position="608"/>
    </location>
</feature>
<feature type="strand" evidence="37">
    <location>
        <begin position="612"/>
        <end position="617"/>
    </location>
</feature>
<feature type="strand" evidence="37">
    <location>
        <begin position="626"/>
        <end position="628"/>
    </location>
</feature>
<feature type="helix" evidence="37">
    <location>
        <begin position="630"/>
        <end position="634"/>
    </location>
</feature>
<feature type="helix" evidence="37">
    <location>
        <begin position="638"/>
        <end position="642"/>
    </location>
</feature>
<feature type="strand" evidence="37">
    <location>
        <begin position="645"/>
        <end position="649"/>
    </location>
</feature>
<feature type="helix" evidence="37">
    <location>
        <begin position="656"/>
        <end position="668"/>
    </location>
</feature>
<feature type="helix" evidence="37">
    <location>
        <begin position="684"/>
        <end position="697"/>
    </location>
</feature>
<feature type="helix" evidence="37">
    <location>
        <begin position="704"/>
        <end position="721"/>
    </location>
</feature>
<feature type="helix" evidence="37">
    <location>
        <begin position="732"/>
        <end position="747"/>
    </location>
</feature>
<feature type="strand" evidence="37">
    <location>
        <begin position="751"/>
        <end position="753"/>
    </location>
</feature>
<feature type="helix" evidence="37">
    <location>
        <begin position="755"/>
        <end position="768"/>
    </location>
</feature>
<feature type="turn" evidence="37">
    <location>
        <begin position="769"/>
        <end position="773"/>
    </location>
</feature>
<feature type="turn" evidence="37">
    <location>
        <begin position="776"/>
        <end position="778"/>
    </location>
</feature>
<organism>
    <name type="scientific">Homo sapiens</name>
    <name type="common">Human</name>
    <dbReference type="NCBI Taxonomy" id="9606"/>
    <lineage>
        <taxon>Eukaryota</taxon>
        <taxon>Metazoa</taxon>
        <taxon>Chordata</taxon>
        <taxon>Craniata</taxon>
        <taxon>Vertebrata</taxon>
        <taxon>Euteleostomi</taxon>
        <taxon>Mammalia</taxon>
        <taxon>Eutheria</taxon>
        <taxon>Euarchontoglires</taxon>
        <taxon>Primates</taxon>
        <taxon>Haplorrhini</taxon>
        <taxon>Catarrhini</taxon>
        <taxon>Hominidae</taxon>
        <taxon>Homo</taxon>
    </lineage>
</organism>
<dbReference type="EC" id="3.6.4.12" evidence="1"/>
<dbReference type="EMBL" id="X74794">
    <property type="protein sequence ID" value="CAA52801.1"/>
    <property type="molecule type" value="mRNA"/>
</dbReference>
<dbReference type="EMBL" id="AY588245">
    <property type="protein sequence ID" value="AAS83108.1"/>
    <property type="molecule type" value="Genomic_DNA"/>
</dbReference>
<dbReference type="EMBL" id="BC031061">
    <property type="protein sequence ID" value="AAH31061.1"/>
    <property type="molecule type" value="mRNA"/>
</dbReference>
<dbReference type="EMBL" id="U63630">
    <property type="protein sequence ID" value="AAC52018.1"/>
    <property type="molecule type" value="Genomic_DNA"/>
</dbReference>
<dbReference type="EMBL" id="U90415">
    <property type="protein sequence ID" value="AAB51723.3"/>
    <property type="molecule type" value="Genomic_DNA"/>
</dbReference>
<dbReference type="CCDS" id="CCDS6143.1"/>
<dbReference type="PIR" id="S65954">
    <property type="entry name" value="S65954"/>
</dbReference>
<dbReference type="RefSeq" id="NP_005905.2">
    <property type="nucleotide sequence ID" value="NM_005914.3"/>
</dbReference>
<dbReference type="RefSeq" id="NP_877423.1">
    <property type="nucleotide sequence ID" value="NM_182746.3"/>
</dbReference>
<dbReference type="PDB" id="6XTX">
    <property type="method" value="EM"/>
    <property type="resolution" value="3.29 A"/>
    <property type="chains" value="4=1-863"/>
</dbReference>
<dbReference type="PDB" id="6XTY">
    <property type="method" value="EM"/>
    <property type="resolution" value="6.77 A"/>
    <property type="chains" value="4=1-863"/>
</dbReference>
<dbReference type="PDB" id="7PFO">
    <property type="method" value="EM"/>
    <property type="resolution" value="3.20 A"/>
    <property type="chains" value="4=1-863"/>
</dbReference>
<dbReference type="PDB" id="7PLO">
    <property type="method" value="EM"/>
    <property type="resolution" value="2.80 A"/>
    <property type="chains" value="4=1-863"/>
</dbReference>
<dbReference type="PDB" id="7W1Y">
    <property type="method" value="EM"/>
    <property type="resolution" value="2.59 A"/>
    <property type="chains" value="4/C=1-863"/>
</dbReference>
<dbReference type="PDB" id="7W68">
    <property type="method" value="EM"/>
    <property type="resolution" value="4.40 A"/>
    <property type="chains" value="C=1-863"/>
</dbReference>
<dbReference type="PDB" id="8B9D">
    <property type="method" value="EM"/>
    <property type="resolution" value="3.40 A"/>
    <property type="chains" value="4=1-863"/>
</dbReference>
<dbReference type="PDB" id="8RWV">
    <property type="method" value="EM"/>
    <property type="resolution" value="6.68 A"/>
    <property type="chains" value="4=1-863"/>
</dbReference>
<dbReference type="PDB" id="8S09">
    <property type="method" value="EM"/>
    <property type="resolution" value="3.10 A"/>
    <property type="chains" value="4/C=1-863"/>
</dbReference>
<dbReference type="PDB" id="8S0A">
    <property type="method" value="EM"/>
    <property type="resolution" value="3.20 A"/>
    <property type="chains" value="4=1-863"/>
</dbReference>
<dbReference type="PDB" id="8S0B">
    <property type="method" value="EM"/>
    <property type="resolution" value="3.60 A"/>
    <property type="chains" value="4=1-863"/>
</dbReference>
<dbReference type="PDB" id="8S0D">
    <property type="method" value="EM"/>
    <property type="resolution" value="3.60 A"/>
    <property type="chains" value="4=1-863"/>
</dbReference>
<dbReference type="PDB" id="8S0E">
    <property type="method" value="EM"/>
    <property type="resolution" value="3.80 A"/>
    <property type="chains" value="4=1-863"/>
</dbReference>
<dbReference type="PDB" id="8S0F">
    <property type="method" value="EM"/>
    <property type="resolution" value="4.10 A"/>
    <property type="chains" value="4=1-863"/>
</dbReference>
<dbReference type="PDB" id="8W0E">
    <property type="method" value="EM"/>
    <property type="resolution" value="3.40 A"/>
    <property type="chains" value="4=1-863"/>
</dbReference>
<dbReference type="PDB" id="8W0F">
    <property type="method" value="EM"/>
    <property type="resolution" value="2.80 A"/>
    <property type="chains" value="4/C=1-863"/>
</dbReference>
<dbReference type="PDB" id="8W0G">
    <property type="method" value="EM"/>
    <property type="resolution" value="3.80 A"/>
    <property type="chains" value="4/C=1-863"/>
</dbReference>
<dbReference type="PDB" id="8W0I">
    <property type="method" value="EM"/>
    <property type="resolution" value="3.50 A"/>
    <property type="chains" value="4=1-863"/>
</dbReference>
<dbReference type="PDB" id="9CAQ">
    <property type="method" value="EM"/>
    <property type="resolution" value="3.20 A"/>
    <property type="chains" value="4/C=1-863"/>
</dbReference>
<dbReference type="PDBsum" id="6XTX"/>
<dbReference type="PDBsum" id="6XTY"/>
<dbReference type="PDBsum" id="7PFO"/>
<dbReference type="PDBsum" id="7PLO"/>
<dbReference type="PDBsum" id="7W1Y"/>
<dbReference type="PDBsum" id="7W68"/>
<dbReference type="PDBsum" id="8B9D"/>
<dbReference type="PDBsum" id="8RWV"/>
<dbReference type="PDBsum" id="8S09"/>
<dbReference type="PDBsum" id="8S0A"/>
<dbReference type="PDBsum" id="8S0B"/>
<dbReference type="PDBsum" id="8S0D"/>
<dbReference type="PDBsum" id="8S0E"/>
<dbReference type="PDBsum" id="8S0F"/>
<dbReference type="PDBsum" id="8W0E"/>
<dbReference type="PDBsum" id="8W0F"/>
<dbReference type="PDBsum" id="8W0G"/>
<dbReference type="PDBsum" id="8W0I"/>
<dbReference type="PDBsum" id="9CAQ"/>
<dbReference type="EMDB" id="EMD-10619"/>
<dbReference type="EMDB" id="EMD-10621"/>
<dbReference type="EMDB" id="EMD-13375"/>
<dbReference type="EMDB" id="EMD-13494"/>
<dbReference type="EMDB" id="EMD-19566"/>
<dbReference type="EMDB" id="EMD-19618"/>
<dbReference type="EMDB" id="EMD-19619"/>
<dbReference type="EMDB" id="EMD-19620"/>
<dbReference type="EMDB" id="EMD-19622"/>
<dbReference type="EMDB" id="EMD-19623"/>
<dbReference type="EMDB" id="EMD-19624"/>
<dbReference type="EMDB" id="EMD-32258"/>
<dbReference type="EMDB" id="EMD-32326"/>
<dbReference type="EMDB" id="EMD-43707"/>
<dbReference type="EMDB" id="EMD-43708"/>
<dbReference type="EMDB" id="EMD-43709"/>
<dbReference type="EMDB" id="EMD-43710"/>
<dbReference type="EMDB" id="EMD-45400"/>
<dbReference type="SMR" id="P33991"/>
<dbReference type="BioGRID" id="110341">
    <property type="interactions" value="321"/>
</dbReference>
<dbReference type="ComplexPortal" id="CPX-2940">
    <property type="entry name" value="MCM complex"/>
</dbReference>
<dbReference type="CORUM" id="P33991"/>
<dbReference type="DIP" id="DIP-31729N"/>
<dbReference type="FunCoup" id="P33991">
    <property type="interactions" value="2693"/>
</dbReference>
<dbReference type="IntAct" id="P33991">
    <property type="interactions" value="132"/>
</dbReference>
<dbReference type="MINT" id="P33991"/>
<dbReference type="STRING" id="9606.ENSP00000262105"/>
<dbReference type="ChEMBL" id="CHEMBL4105745"/>
<dbReference type="GlyGen" id="P33991">
    <property type="glycosylation" value="4 sites, 1 N-linked glycan (1 site), 1 O-linked glycan (2 sites)"/>
</dbReference>
<dbReference type="iPTMnet" id="P33991"/>
<dbReference type="MetOSite" id="P33991"/>
<dbReference type="PhosphoSitePlus" id="P33991"/>
<dbReference type="SwissPalm" id="P33991"/>
<dbReference type="BioMuta" id="MCM4"/>
<dbReference type="DMDM" id="68571766"/>
<dbReference type="jPOST" id="P33991"/>
<dbReference type="MassIVE" id="P33991"/>
<dbReference type="PaxDb" id="9606-ENSP00000262105"/>
<dbReference type="PeptideAtlas" id="P33991"/>
<dbReference type="ProteomicsDB" id="54934"/>
<dbReference type="Pumba" id="P33991"/>
<dbReference type="TopDownProteomics" id="P33991"/>
<dbReference type="Antibodypedia" id="1452">
    <property type="antibodies" value="466 antibodies from 36 providers"/>
</dbReference>
<dbReference type="DNASU" id="4173"/>
<dbReference type="Ensembl" id="ENST00000262105.6">
    <property type="protein sequence ID" value="ENSP00000262105.2"/>
    <property type="gene ID" value="ENSG00000104738.19"/>
</dbReference>
<dbReference type="Ensembl" id="ENST00000649973.1">
    <property type="protein sequence ID" value="ENSP00000496964.1"/>
    <property type="gene ID" value="ENSG00000104738.19"/>
</dbReference>
<dbReference type="GeneID" id="4173"/>
<dbReference type="KEGG" id="hsa:4173"/>
<dbReference type="MANE-Select" id="ENST00000649973.1">
    <property type="protein sequence ID" value="ENSP00000496964.1"/>
    <property type="RefSeq nucleotide sequence ID" value="NM_182746.3"/>
    <property type="RefSeq protein sequence ID" value="NP_877423.1"/>
</dbReference>
<dbReference type="UCSC" id="uc003xqk.3">
    <property type="organism name" value="human"/>
</dbReference>
<dbReference type="AGR" id="HGNC:6947"/>
<dbReference type="CTD" id="4173"/>
<dbReference type="DisGeNET" id="4173"/>
<dbReference type="GeneCards" id="MCM4"/>
<dbReference type="HGNC" id="HGNC:6947">
    <property type="gene designation" value="MCM4"/>
</dbReference>
<dbReference type="HPA" id="ENSG00000104738">
    <property type="expression patterns" value="Tissue enhanced (bone)"/>
</dbReference>
<dbReference type="MalaCards" id="MCM4"/>
<dbReference type="MIM" id="602638">
    <property type="type" value="gene"/>
</dbReference>
<dbReference type="MIM" id="609981">
    <property type="type" value="phenotype"/>
</dbReference>
<dbReference type="neXtProt" id="NX_P33991"/>
<dbReference type="OpenTargets" id="ENSG00000104738"/>
<dbReference type="Orphanet" id="75391">
    <property type="disease" value="Primary immunodeficiency with natural-killer cell deficiency and adrenal insufficiency"/>
</dbReference>
<dbReference type="PharmGKB" id="PA30694"/>
<dbReference type="VEuPathDB" id="HostDB:ENSG00000104738"/>
<dbReference type="eggNOG" id="KOG0478">
    <property type="taxonomic scope" value="Eukaryota"/>
</dbReference>
<dbReference type="GeneTree" id="ENSGT01110000267230"/>
<dbReference type="HOGENOM" id="CLU_000995_7_1_1"/>
<dbReference type="InParanoid" id="P33991"/>
<dbReference type="OrthoDB" id="10251574at2759"/>
<dbReference type="PAN-GO" id="P33991">
    <property type="GO annotations" value="8 GO annotations based on evolutionary models"/>
</dbReference>
<dbReference type="PhylomeDB" id="P33991"/>
<dbReference type="TreeFam" id="TF300463"/>
<dbReference type="PathwayCommons" id="P33991"/>
<dbReference type="Reactome" id="R-HSA-176187">
    <property type="pathway name" value="Activation of ATR in response to replication stress"/>
</dbReference>
<dbReference type="Reactome" id="R-HSA-176974">
    <property type="pathway name" value="Unwinding of DNA"/>
</dbReference>
<dbReference type="Reactome" id="R-HSA-68867">
    <property type="pathway name" value="Assembly of the pre-replicative complex"/>
</dbReference>
<dbReference type="Reactome" id="R-HSA-68949">
    <property type="pathway name" value="Orc1 removal from chromatin"/>
</dbReference>
<dbReference type="Reactome" id="R-HSA-68962">
    <property type="pathway name" value="Activation of the pre-replicative complex"/>
</dbReference>
<dbReference type="Reactome" id="R-HSA-69052">
    <property type="pathway name" value="Switching of origins to a post-replicative state"/>
</dbReference>
<dbReference type="SignaLink" id="P33991"/>
<dbReference type="SIGNOR" id="P33991"/>
<dbReference type="BioGRID-ORCS" id="4173">
    <property type="hits" value="774 hits in 1169 CRISPR screens"/>
</dbReference>
<dbReference type="CD-CODE" id="91857CE7">
    <property type="entry name" value="Nucleolus"/>
</dbReference>
<dbReference type="CD-CODE" id="DEE660B4">
    <property type="entry name" value="Stress granule"/>
</dbReference>
<dbReference type="ChiTaRS" id="MCM4">
    <property type="organism name" value="human"/>
</dbReference>
<dbReference type="GeneWiki" id="MCM4"/>
<dbReference type="GenomeRNAi" id="4173"/>
<dbReference type="Pharos" id="P33991">
    <property type="development level" value="Tchem"/>
</dbReference>
<dbReference type="PRO" id="PR:P33991"/>
<dbReference type="Proteomes" id="UP000005640">
    <property type="component" value="Chromosome 8"/>
</dbReference>
<dbReference type="RNAct" id="P33991">
    <property type="molecule type" value="protein"/>
</dbReference>
<dbReference type="Bgee" id="ENSG00000104738">
    <property type="expression patterns" value="Expressed in ventricular zone and 202 other cell types or tissues"/>
</dbReference>
<dbReference type="ExpressionAtlas" id="P33991">
    <property type="expression patterns" value="baseline and differential"/>
</dbReference>
<dbReference type="GO" id="GO:0000781">
    <property type="term" value="C:chromosome, telomeric region"/>
    <property type="evidence" value="ECO:0007005"/>
    <property type="project" value="BHF-UCL"/>
</dbReference>
<dbReference type="GO" id="GO:0071162">
    <property type="term" value="C:CMG complex"/>
    <property type="evidence" value="ECO:0000353"/>
    <property type="project" value="ComplexPortal"/>
</dbReference>
<dbReference type="GO" id="GO:0042555">
    <property type="term" value="C:MCM complex"/>
    <property type="evidence" value="ECO:0000314"/>
    <property type="project" value="UniProtKB"/>
</dbReference>
<dbReference type="GO" id="GO:0016020">
    <property type="term" value="C:membrane"/>
    <property type="evidence" value="ECO:0007005"/>
    <property type="project" value="UniProtKB"/>
</dbReference>
<dbReference type="GO" id="GO:0005654">
    <property type="term" value="C:nucleoplasm"/>
    <property type="evidence" value="ECO:0000314"/>
    <property type="project" value="HPA"/>
</dbReference>
<dbReference type="GO" id="GO:0005634">
    <property type="term" value="C:nucleus"/>
    <property type="evidence" value="ECO:0000314"/>
    <property type="project" value="ComplexPortal"/>
</dbReference>
<dbReference type="GO" id="GO:0005524">
    <property type="term" value="F:ATP binding"/>
    <property type="evidence" value="ECO:0007669"/>
    <property type="project" value="UniProtKB-KW"/>
</dbReference>
<dbReference type="GO" id="GO:0016887">
    <property type="term" value="F:ATP hydrolysis activity"/>
    <property type="evidence" value="ECO:0007669"/>
    <property type="project" value="RHEA"/>
</dbReference>
<dbReference type="GO" id="GO:0003678">
    <property type="term" value="F:DNA helicase activity"/>
    <property type="evidence" value="ECO:0007669"/>
    <property type="project" value="Ensembl"/>
</dbReference>
<dbReference type="GO" id="GO:0003697">
    <property type="term" value="F:single-stranded DNA binding"/>
    <property type="evidence" value="ECO:0007669"/>
    <property type="project" value="Ensembl"/>
</dbReference>
<dbReference type="GO" id="GO:0006260">
    <property type="term" value="P:DNA replication"/>
    <property type="evidence" value="ECO:0000318"/>
    <property type="project" value="GO_Central"/>
</dbReference>
<dbReference type="GO" id="GO:0006271">
    <property type="term" value="P:DNA strand elongation involved in DNA replication"/>
    <property type="evidence" value="ECO:0000318"/>
    <property type="project" value="GO_Central"/>
</dbReference>
<dbReference type="GO" id="GO:0000727">
    <property type="term" value="P:double-strand break repair via break-induced replication"/>
    <property type="evidence" value="ECO:0000318"/>
    <property type="project" value="GO_Central"/>
</dbReference>
<dbReference type="GO" id="GO:1902975">
    <property type="term" value="P:mitotic DNA replication initiation"/>
    <property type="evidence" value="ECO:0000318"/>
    <property type="project" value="GO_Central"/>
</dbReference>
<dbReference type="GO" id="GO:0030174">
    <property type="term" value="P:regulation of DNA-templated DNA replication initiation"/>
    <property type="evidence" value="ECO:0000303"/>
    <property type="project" value="ComplexPortal"/>
</dbReference>
<dbReference type="CDD" id="cd17755">
    <property type="entry name" value="MCM4"/>
    <property type="match status" value="1"/>
</dbReference>
<dbReference type="FunFam" id="2.20.28.10:FF:000003">
    <property type="entry name" value="DNA helicase"/>
    <property type="match status" value="1"/>
</dbReference>
<dbReference type="FunFam" id="3.30.1640.10:FF:000001">
    <property type="entry name" value="DNA helicase"/>
    <property type="match status" value="1"/>
</dbReference>
<dbReference type="FunFam" id="3.40.50.300:FF:000217">
    <property type="entry name" value="DNA helicase"/>
    <property type="match status" value="1"/>
</dbReference>
<dbReference type="Gene3D" id="2.20.28.10">
    <property type="match status" value="1"/>
</dbReference>
<dbReference type="Gene3D" id="3.30.1640.10">
    <property type="entry name" value="mini-chromosome maintenance (MCM) complex, chain A, domain 1"/>
    <property type="match status" value="1"/>
</dbReference>
<dbReference type="Gene3D" id="2.40.50.140">
    <property type="entry name" value="Nucleic acid-binding proteins"/>
    <property type="match status" value="1"/>
</dbReference>
<dbReference type="Gene3D" id="3.40.50.300">
    <property type="entry name" value="P-loop containing nucleotide triphosphate hydrolases"/>
    <property type="match status" value="1"/>
</dbReference>
<dbReference type="InterPro" id="IPR031327">
    <property type="entry name" value="MCM"/>
</dbReference>
<dbReference type="InterPro" id="IPR008047">
    <property type="entry name" value="MCM_4"/>
</dbReference>
<dbReference type="InterPro" id="IPR018525">
    <property type="entry name" value="MCM_CS"/>
</dbReference>
<dbReference type="InterPro" id="IPR001208">
    <property type="entry name" value="MCM_dom"/>
</dbReference>
<dbReference type="InterPro" id="IPR041562">
    <property type="entry name" value="MCM_lid"/>
</dbReference>
<dbReference type="InterPro" id="IPR027925">
    <property type="entry name" value="MCM_N"/>
</dbReference>
<dbReference type="InterPro" id="IPR033762">
    <property type="entry name" value="MCM_OB"/>
</dbReference>
<dbReference type="InterPro" id="IPR012340">
    <property type="entry name" value="NA-bd_OB-fold"/>
</dbReference>
<dbReference type="InterPro" id="IPR027417">
    <property type="entry name" value="P-loop_NTPase"/>
</dbReference>
<dbReference type="PANTHER" id="PTHR11630">
    <property type="entry name" value="DNA REPLICATION LICENSING FACTOR MCM FAMILY MEMBER"/>
    <property type="match status" value="1"/>
</dbReference>
<dbReference type="PANTHER" id="PTHR11630:SF66">
    <property type="entry name" value="DNA REPLICATION LICENSING FACTOR MCM4"/>
    <property type="match status" value="1"/>
</dbReference>
<dbReference type="Pfam" id="PF00493">
    <property type="entry name" value="MCM"/>
    <property type="match status" value="1"/>
</dbReference>
<dbReference type="Pfam" id="PF21128">
    <property type="entry name" value="MCM4_WHD"/>
    <property type="match status" value="1"/>
</dbReference>
<dbReference type="Pfam" id="PF17855">
    <property type="entry name" value="MCM_lid"/>
    <property type="match status" value="1"/>
</dbReference>
<dbReference type="Pfam" id="PF14551">
    <property type="entry name" value="MCM_N"/>
    <property type="match status" value="1"/>
</dbReference>
<dbReference type="Pfam" id="PF17207">
    <property type="entry name" value="MCM_OB"/>
    <property type="match status" value="1"/>
</dbReference>
<dbReference type="PRINTS" id="PR01657">
    <property type="entry name" value="MCMFAMILY"/>
</dbReference>
<dbReference type="PRINTS" id="PR01660">
    <property type="entry name" value="MCMPROTEIN4"/>
</dbReference>
<dbReference type="SMART" id="SM00350">
    <property type="entry name" value="MCM"/>
    <property type="match status" value="1"/>
</dbReference>
<dbReference type="SUPFAM" id="SSF50249">
    <property type="entry name" value="Nucleic acid-binding proteins"/>
    <property type="match status" value="1"/>
</dbReference>
<dbReference type="SUPFAM" id="SSF52540">
    <property type="entry name" value="P-loop containing nucleoside triphosphate hydrolases"/>
    <property type="match status" value="1"/>
</dbReference>
<dbReference type="PROSITE" id="PS00847">
    <property type="entry name" value="MCM_1"/>
    <property type="match status" value="1"/>
</dbReference>
<dbReference type="PROSITE" id="PS50051">
    <property type="entry name" value="MCM_2"/>
    <property type="match status" value="1"/>
</dbReference>
<sequence>MSSPASTPSRRGSRRGRATPAQTPRSEDARSSPSQRRRGEDSTSTGELQPMPTSPGVDLQSPAAQDVLFSSPPQMHSSAIPLDFDVSSPLTYGTPSSRVEGTPRSGVRGTPVRQRPDLGSAQKGLQVDLQSDGAAAEDIVASEQSLGQKLVIWGTDVNVAACKENFQRFLQRFIDPLAKEEENVGIDITEPLYMQRLGEINVIGEPFLNVNCEHIKSFDKNLYRQLISYPQEVIPTFDMAVNEIFFDRYPDSILEHQIQVRPFNALKTKNMRNLNPEDIDQLITISGMVIRTSQLIPEMQEAFFQCQVCAHTTRVEMDRGRIAEPSVCGRCHTTHSMALIHNRSLFSDKQMIKLQESPEDMPAGQTPHTVILFAHNDLVDKVQPGDRVNVTGIYRAVPIRVNPRVSNVKSVYKTHIDVIHYRKTDAKRLHGLDEEAEQKLFSEKRVELLKELSRKPDIYERLASALAPSIYEHEDIKKGILLQLFGGTRKDFSHTGRGKFRAEINILLCGDPGTSKSQLLQYVYNLVPRGQYTSGKGSSAVGLTAYVMKDPETRQLVLQTGALVLSDNGICCIDEFDKMNESTRSVLHEVMEQQTLSIAKAGIICQLNARTSVLAAANPIESQWNPKKTTIENIQLPHTLLSRFDLIFLLLDPQDEAYDRRLAHHLVALYYQSEEQAEEELLDMAVLKDYIAYAHSTIMPRLSEEASQALIEAYVDMRKIGSSRGMVSAYPRQLESLIRLAEAHAKVRLSNKVEAIDVEEAKRLHREALKQSATDPRTGIVDISILTTGMSATSRKRKEELAEALKKLILSKGKTPALKYQQLFEDIRGQSDIAITKDMFEEALRALADDDFLTVTGKTVRLL</sequence>
<evidence type="ECO:0000250" key="1">
    <source>
        <dbReference type="UniProtKB" id="P49717"/>
    </source>
</evidence>
<evidence type="ECO:0000256" key="2">
    <source>
        <dbReference type="SAM" id="MobiDB-lite"/>
    </source>
</evidence>
<evidence type="ECO:0000269" key="3">
    <source>
    </source>
</evidence>
<evidence type="ECO:0000269" key="4">
    <source>
    </source>
</evidence>
<evidence type="ECO:0000269" key="5">
    <source>
    </source>
</evidence>
<evidence type="ECO:0000269" key="6">
    <source>
    </source>
</evidence>
<evidence type="ECO:0000269" key="7">
    <source>
    </source>
</evidence>
<evidence type="ECO:0000269" key="8">
    <source>
    </source>
</evidence>
<evidence type="ECO:0000269" key="9">
    <source>
    </source>
</evidence>
<evidence type="ECO:0000269" key="10">
    <source>
    </source>
</evidence>
<evidence type="ECO:0000269" key="11">
    <source>
    </source>
</evidence>
<evidence type="ECO:0000269" key="12">
    <source>
    </source>
</evidence>
<evidence type="ECO:0000269" key="13">
    <source>
    </source>
</evidence>
<evidence type="ECO:0000269" key="14">
    <source>
    </source>
</evidence>
<evidence type="ECO:0000269" key="15">
    <source>
    </source>
</evidence>
<evidence type="ECO:0000269" key="16">
    <source>
    </source>
</evidence>
<evidence type="ECO:0000269" key="17">
    <source>
    </source>
</evidence>
<evidence type="ECO:0000269" key="18">
    <source ref="2"/>
</evidence>
<evidence type="ECO:0000305" key="19"/>
<evidence type="ECO:0000305" key="20">
    <source>
    </source>
</evidence>
<evidence type="ECO:0000305" key="21">
    <source>
    </source>
</evidence>
<evidence type="ECO:0000312" key="22">
    <source>
        <dbReference type="HGNC" id="HGNC:6947"/>
    </source>
</evidence>
<evidence type="ECO:0007744" key="23">
    <source>
        <dbReference type="PDB" id="6XTX"/>
    </source>
</evidence>
<evidence type="ECO:0007744" key="24">
    <source>
        <dbReference type="PDB" id="6XTY"/>
    </source>
</evidence>
<evidence type="ECO:0007744" key="25">
    <source>
        <dbReference type="PDB" id="7PFO"/>
    </source>
</evidence>
<evidence type="ECO:0007744" key="26">
    <source>
        <dbReference type="PDB" id="7PLO"/>
    </source>
</evidence>
<evidence type="ECO:0007744" key="27">
    <source>
    </source>
</evidence>
<evidence type="ECO:0007744" key="28">
    <source>
    </source>
</evidence>
<evidence type="ECO:0007744" key="29">
    <source>
    </source>
</evidence>
<evidence type="ECO:0007744" key="30">
    <source>
    </source>
</evidence>
<evidence type="ECO:0007744" key="31">
    <source>
    </source>
</evidence>
<evidence type="ECO:0007744" key="32">
    <source>
    </source>
</evidence>
<evidence type="ECO:0007744" key="33">
    <source>
    </source>
</evidence>
<evidence type="ECO:0007744" key="34">
    <source>
    </source>
</evidence>
<evidence type="ECO:0007744" key="35">
    <source>
    </source>
</evidence>
<evidence type="ECO:0007744" key="36">
    <source>
    </source>
</evidence>
<evidence type="ECO:0007829" key="37">
    <source>
        <dbReference type="PDB" id="8S09"/>
    </source>
</evidence>